<dbReference type="EC" id="3.6.5.-"/>
<dbReference type="EMBL" id="FO080723">
    <property type="protein sequence ID" value="CCD66161.1"/>
    <property type="molecule type" value="Genomic_DNA"/>
</dbReference>
<dbReference type="PIR" id="S44896">
    <property type="entry name" value="S44896"/>
</dbReference>
<dbReference type="RefSeq" id="NP_498863.1">
    <property type="nucleotide sequence ID" value="NM_066462.5"/>
</dbReference>
<dbReference type="SMR" id="P34617"/>
<dbReference type="FunCoup" id="P34617">
    <property type="interactions" value="2952"/>
</dbReference>
<dbReference type="STRING" id="6239.ZK1236.1.1"/>
<dbReference type="PaxDb" id="6239-ZK1236.1"/>
<dbReference type="PeptideAtlas" id="P34617"/>
<dbReference type="EnsemblMetazoa" id="ZK1236.1.1">
    <property type="protein sequence ID" value="ZK1236.1.1"/>
    <property type="gene ID" value="WBGene00022862"/>
</dbReference>
<dbReference type="GeneID" id="176191"/>
<dbReference type="KEGG" id="cel:CELE_ZK1236.1"/>
<dbReference type="UCSC" id="ZK1236.1">
    <property type="organism name" value="c. elegans"/>
</dbReference>
<dbReference type="AGR" id="WB:WBGene00022862"/>
<dbReference type="CTD" id="176191"/>
<dbReference type="WormBase" id="ZK1236.1">
    <property type="protein sequence ID" value="CE01446"/>
    <property type="gene ID" value="WBGene00022862"/>
</dbReference>
<dbReference type="eggNOG" id="KOG0462">
    <property type="taxonomic scope" value="Eukaryota"/>
</dbReference>
<dbReference type="GeneTree" id="ENSGT00550000074940"/>
<dbReference type="HOGENOM" id="CLU_009995_3_3_1"/>
<dbReference type="InParanoid" id="P34617"/>
<dbReference type="OMA" id="QVKCDEN"/>
<dbReference type="OrthoDB" id="1074at2759"/>
<dbReference type="PhylomeDB" id="P34617"/>
<dbReference type="PRO" id="PR:P34617"/>
<dbReference type="Proteomes" id="UP000001940">
    <property type="component" value="Chromosome III"/>
</dbReference>
<dbReference type="Bgee" id="WBGene00022862">
    <property type="expression patterns" value="Expressed in germ line (C elegans) and 4 other cell types or tissues"/>
</dbReference>
<dbReference type="GO" id="GO:0005743">
    <property type="term" value="C:mitochondrial inner membrane"/>
    <property type="evidence" value="ECO:0007669"/>
    <property type="project" value="UniProtKB-SubCell"/>
</dbReference>
<dbReference type="GO" id="GO:0005759">
    <property type="term" value="C:mitochondrial matrix"/>
    <property type="evidence" value="ECO:0007669"/>
    <property type="project" value="UniProtKB-UniRule"/>
</dbReference>
<dbReference type="GO" id="GO:0005739">
    <property type="term" value="C:mitochondrion"/>
    <property type="evidence" value="ECO:0000314"/>
    <property type="project" value="FlyBase"/>
</dbReference>
<dbReference type="GO" id="GO:0005525">
    <property type="term" value="F:GTP binding"/>
    <property type="evidence" value="ECO:0007669"/>
    <property type="project" value="UniProtKB-UniRule"/>
</dbReference>
<dbReference type="GO" id="GO:0003924">
    <property type="term" value="F:GTPase activity"/>
    <property type="evidence" value="ECO:0007669"/>
    <property type="project" value="UniProtKB-UniRule"/>
</dbReference>
<dbReference type="GO" id="GO:0097177">
    <property type="term" value="F:mitochondrial ribosome binding"/>
    <property type="evidence" value="ECO:0000318"/>
    <property type="project" value="GO_Central"/>
</dbReference>
<dbReference type="GO" id="GO:0045727">
    <property type="term" value="P:positive regulation of translation"/>
    <property type="evidence" value="ECO:0000318"/>
    <property type="project" value="GO_Central"/>
</dbReference>
<dbReference type="GO" id="GO:0006412">
    <property type="term" value="P:translation"/>
    <property type="evidence" value="ECO:0007669"/>
    <property type="project" value="UniProtKB-KW"/>
</dbReference>
<dbReference type="CDD" id="cd03699">
    <property type="entry name" value="EF4_II"/>
    <property type="match status" value="1"/>
</dbReference>
<dbReference type="CDD" id="cd16260">
    <property type="entry name" value="EF4_III"/>
    <property type="match status" value="1"/>
</dbReference>
<dbReference type="CDD" id="cd01890">
    <property type="entry name" value="LepA"/>
    <property type="match status" value="1"/>
</dbReference>
<dbReference type="CDD" id="cd03709">
    <property type="entry name" value="lepA_C"/>
    <property type="match status" value="1"/>
</dbReference>
<dbReference type="FunFam" id="3.40.50.300:FF:001496">
    <property type="entry name" value="Translation factor GUF1 homolog, mitochondrial"/>
    <property type="match status" value="1"/>
</dbReference>
<dbReference type="FunFam" id="2.40.30.10:FF:000015">
    <property type="entry name" value="Translation factor GUF1, mitochondrial"/>
    <property type="match status" value="1"/>
</dbReference>
<dbReference type="FunFam" id="3.30.70.240:FF:000007">
    <property type="entry name" value="Translation factor GUF1, mitochondrial"/>
    <property type="match status" value="1"/>
</dbReference>
<dbReference type="FunFam" id="3.30.70.870:FF:000004">
    <property type="entry name" value="Translation factor GUF1, mitochondrial"/>
    <property type="match status" value="1"/>
</dbReference>
<dbReference type="Gene3D" id="3.30.70.240">
    <property type="match status" value="1"/>
</dbReference>
<dbReference type="Gene3D" id="3.30.70.2570">
    <property type="entry name" value="Elongation factor 4, C-terminal domain"/>
    <property type="match status" value="1"/>
</dbReference>
<dbReference type="Gene3D" id="3.30.70.870">
    <property type="entry name" value="Elongation Factor G (Translational Gtpase), domain 3"/>
    <property type="match status" value="1"/>
</dbReference>
<dbReference type="Gene3D" id="3.40.50.300">
    <property type="entry name" value="P-loop containing nucleotide triphosphate hydrolases"/>
    <property type="match status" value="1"/>
</dbReference>
<dbReference type="Gene3D" id="2.40.30.10">
    <property type="entry name" value="Translation factors"/>
    <property type="match status" value="1"/>
</dbReference>
<dbReference type="HAMAP" id="MF_00071">
    <property type="entry name" value="LepA"/>
    <property type="match status" value="1"/>
</dbReference>
<dbReference type="InterPro" id="IPR006297">
    <property type="entry name" value="EF-4"/>
</dbReference>
<dbReference type="InterPro" id="IPR035647">
    <property type="entry name" value="EFG_III/V"/>
</dbReference>
<dbReference type="InterPro" id="IPR000640">
    <property type="entry name" value="EFG_V-like"/>
</dbReference>
<dbReference type="InterPro" id="IPR004161">
    <property type="entry name" value="EFTu-like_2"/>
</dbReference>
<dbReference type="InterPro" id="IPR031157">
    <property type="entry name" value="G_TR_CS"/>
</dbReference>
<dbReference type="InterPro" id="IPR038363">
    <property type="entry name" value="LepA_C_sf"/>
</dbReference>
<dbReference type="InterPro" id="IPR013842">
    <property type="entry name" value="LepA_CTD"/>
</dbReference>
<dbReference type="InterPro" id="IPR035654">
    <property type="entry name" value="LepA_IV"/>
</dbReference>
<dbReference type="InterPro" id="IPR027417">
    <property type="entry name" value="P-loop_NTPase"/>
</dbReference>
<dbReference type="InterPro" id="IPR005225">
    <property type="entry name" value="Small_GTP-bd"/>
</dbReference>
<dbReference type="InterPro" id="IPR000795">
    <property type="entry name" value="T_Tr_GTP-bd_dom"/>
</dbReference>
<dbReference type="InterPro" id="IPR009000">
    <property type="entry name" value="Transl_B-barrel_sf"/>
</dbReference>
<dbReference type="NCBIfam" id="TIGR01393">
    <property type="entry name" value="lepA"/>
    <property type="match status" value="1"/>
</dbReference>
<dbReference type="NCBIfam" id="TIGR00231">
    <property type="entry name" value="small_GTP"/>
    <property type="match status" value="1"/>
</dbReference>
<dbReference type="PANTHER" id="PTHR43512:SF7">
    <property type="entry name" value="TRANSLATION FACTOR GUF1, MITOCHONDRIAL"/>
    <property type="match status" value="1"/>
</dbReference>
<dbReference type="PANTHER" id="PTHR43512">
    <property type="entry name" value="TRANSLATION FACTOR GUF1-RELATED"/>
    <property type="match status" value="1"/>
</dbReference>
<dbReference type="Pfam" id="PF00679">
    <property type="entry name" value="EFG_C"/>
    <property type="match status" value="1"/>
</dbReference>
<dbReference type="Pfam" id="PF00009">
    <property type="entry name" value="GTP_EFTU"/>
    <property type="match status" value="1"/>
</dbReference>
<dbReference type="Pfam" id="PF03144">
    <property type="entry name" value="GTP_EFTU_D2"/>
    <property type="match status" value="1"/>
</dbReference>
<dbReference type="Pfam" id="PF06421">
    <property type="entry name" value="LepA_C"/>
    <property type="match status" value="1"/>
</dbReference>
<dbReference type="PRINTS" id="PR00315">
    <property type="entry name" value="ELONGATNFCT"/>
</dbReference>
<dbReference type="SMART" id="SM00838">
    <property type="entry name" value="EFG_C"/>
    <property type="match status" value="1"/>
</dbReference>
<dbReference type="SUPFAM" id="SSF54980">
    <property type="entry name" value="EF-G C-terminal domain-like"/>
    <property type="match status" value="2"/>
</dbReference>
<dbReference type="SUPFAM" id="SSF52540">
    <property type="entry name" value="P-loop containing nucleoside triphosphate hydrolases"/>
    <property type="match status" value="1"/>
</dbReference>
<dbReference type="SUPFAM" id="SSF50447">
    <property type="entry name" value="Translation proteins"/>
    <property type="match status" value="1"/>
</dbReference>
<dbReference type="PROSITE" id="PS00301">
    <property type="entry name" value="G_TR_1"/>
    <property type="match status" value="1"/>
</dbReference>
<dbReference type="PROSITE" id="PS51722">
    <property type="entry name" value="G_TR_2"/>
    <property type="match status" value="1"/>
</dbReference>
<sequence length="645" mass="72269">MPRRRLLKLLFIGKLRVSCKHYSTAGDPTKLVNLSEFTPDKIRNFGIVAHVDHGKSTLADRLLEMCGAVPPGQKQMLDKLQVERERGITVKAQTAALRHRGYLLNLIDTPGHVDFSAEVSRSLAVCDGILLLVAANQGVQAQTIANFWLAFEKNIQIIPVINKIDLPGADIKSVETQLKNLFEFNPEECLHISAKSGLNVDKVLEAIIDRVPAPTAIIDAPFRSMIFDSYFDHFRGAIAHIMVKEGSVKKGDKIQSYQNEKVYDVSEVGVMRPEMVKCTELRAGQVGYLVCNMRTVNEAVVGETLFAETTSRDSVKTFAEIKGVKPTVYAGLFPVETSDYESLKQAVERLCLNDPSVTVIPDSSKALGLGWRIGFLGVLHMEVFGARLSQEYDASVILCQPSVEYRAKIKDNETIRKKRYDGMEEIRILDPSKFPDESDVDSFLEPMVKVRMIVPNEMMGTVNGLCSECRGERGEITSIDSTRLVILWRLPLAEVAVDFFERLKKLTSGYASFDYEPDGWQDTRLVKLTILINSKEVSEFSQIIPAAMARDRAKILVQRLKREIPRQQFEVTIKACIGSSTKALSQIVIQPMKRDFSQLLKGNFGGGGMERLNKKLSHQKKGKERMKMVGNVQIPKEAFLNVLKR</sequence>
<protein>
    <recommendedName>
        <fullName evidence="1">Translation factor GUF1 homolog, mitochondrial</fullName>
        <ecNumber>3.6.5.-</ecNumber>
    </recommendedName>
    <alternativeName>
        <fullName evidence="1">Elongation factor 4 homolog</fullName>
        <shortName evidence="1">EF-4</shortName>
    </alternativeName>
    <alternativeName>
        <fullName evidence="1">GTPase GUF1 homolog</fullName>
    </alternativeName>
    <alternativeName>
        <fullName evidence="1">Ribosomal back-translocase</fullName>
    </alternativeName>
</protein>
<accession>P34617</accession>
<reference key="1">
    <citation type="journal article" date="1994" name="Nature">
        <title>2.2 Mb of contiguous nucleotide sequence from chromosome III of C. elegans.</title>
        <authorList>
            <person name="Wilson R."/>
            <person name="Ainscough R."/>
            <person name="Anderson K."/>
            <person name="Baynes C."/>
            <person name="Berks M."/>
            <person name="Bonfield J."/>
            <person name="Burton J."/>
            <person name="Connell M."/>
            <person name="Copsey T."/>
            <person name="Cooper J."/>
            <person name="Coulson A."/>
            <person name="Craxton M."/>
            <person name="Dear S."/>
            <person name="Du Z."/>
            <person name="Durbin R."/>
            <person name="Favello A."/>
            <person name="Fraser A."/>
            <person name="Fulton L."/>
            <person name="Gardner A."/>
            <person name="Green P."/>
            <person name="Hawkins T."/>
            <person name="Hillier L."/>
            <person name="Jier M."/>
            <person name="Johnston L."/>
            <person name="Jones M."/>
            <person name="Kershaw J."/>
            <person name="Kirsten J."/>
            <person name="Laisster N."/>
            <person name="Latreille P."/>
            <person name="Lightning J."/>
            <person name="Lloyd C."/>
            <person name="Mortimore B."/>
            <person name="O'Callaghan M."/>
            <person name="Parsons J."/>
            <person name="Percy C."/>
            <person name="Rifken L."/>
            <person name="Roopra A."/>
            <person name="Saunders D."/>
            <person name="Shownkeen R."/>
            <person name="Sims M."/>
            <person name="Smaldon N."/>
            <person name="Smith A."/>
            <person name="Smith M."/>
            <person name="Sonnhammer E."/>
            <person name="Staden R."/>
            <person name="Sulston J."/>
            <person name="Thierry-Mieg J."/>
            <person name="Thomas K."/>
            <person name="Vaudin M."/>
            <person name="Vaughan K."/>
            <person name="Waterston R."/>
            <person name="Watson A."/>
            <person name="Weinstock L."/>
            <person name="Wilkinson-Sproat J."/>
            <person name="Wohldman P."/>
        </authorList>
    </citation>
    <scope>NUCLEOTIDE SEQUENCE [LARGE SCALE GENOMIC DNA]</scope>
    <source>
        <strain>Bristol N2</strain>
    </source>
</reference>
<reference key="2">
    <citation type="journal article" date="1998" name="Science">
        <title>Genome sequence of the nematode C. elegans: a platform for investigating biology.</title>
        <authorList>
            <consortium name="The C. elegans sequencing consortium"/>
        </authorList>
    </citation>
    <scope>NUCLEOTIDE SEQUENCE [LARGE SCALE GENOMIC DNA]</scope>
    <source>
        <strain>Bristol N2</strain>
    </source>
</reference>
<keyword id="KW-0342">GTP-binding</keyword>
<keyword id="KW-0378">Hydrolase</keyword>
<keyword id="KW-0472">Membrane</keyword>
<keyword id="KW-0496">Mitochondrion</keyword>
<keyword id="KW-0999">Mitochondrion inner membrane</keyword>
<keyword id="KW-0547">Nucleotide-binding</keyword>
<keyword id="KW-0648">Protein biosynthesis</keyword>
<keyword id="KW-1185">Reference proteome</keyword>
<proteinExistence type="inferred from homology"/>
<organism>
    <name type="scientific">Caenorhabditis elegans</name>
    <dbReference type="NCBI Taxonomy" id="6239"/>
    <lineage>
        <taxon>Eukaryota</taxon>
        <taxon>Metazoa</taxon>
        <taxon>Ecdysozoa</taxon>
        <taxon>Nematoda</taxon>
        <taxon>Chromadorea</taxon>
        <taxon>Rhabditida</taxon>
        <taxon>Rhabditina</taxon>
        <taxon>Rhabditomorpha</taxon>
        <taxon>Rhabditoidea</taxon>
        <taxon>Rhabditidae</taxon>
        <taxon>Peloderinae</taxon>
        <taxon>Caenorhabditis</taxon>
    </lineage>
</organism>
<feature type="chain" id="PRO_0000091562" description="Translation factor GUF1 homolog, mitochondrial">
    <location>
        <begin position="1"/>
        <end position="645"/>
    </location>
</feature>
<feature type="domain" description="tr-type G">
    <location>
        <begin position="40"/>
        <end position="215"/>
    </location>
</feature>
<feature type="binding site" evidence="1">
    <location>
        <begin position="49"/>
        <end position="56"/>
    </location>
    <ligand>
        <name>GTP</name>
        <dbReference type="ChEBI" id="CHEBI:37565"/>
    </ligand>
</feature>
<feature type="binding site" evidence="1">
    <location>
        <begin position="108"/>
        <end position="112"/>
    </location>
    <ligand>
        <name>GTP</name>
        <dbReference type="ChEBI" id="CHEBI:37565"/>
    </ligand>
</feature>
<feature type="binding site" evidence="1">
    <location>
        <begin position="162"/>
        <end position="165"/>
    </location>
    <ligand>
        <name>GTP</name>
        <dbReference type="ChEBI" id="CHEBI:37565"/>
    </ligand>
</feature>
<comment type="function">
    <text evidence="1">Promotes mitochondrial protein synthesis. May act as a fidelity factor of the translation reaction, by catalyzing a one-codon backward translocation of tRNAs on improperly translocated ribosomes. Binds to mitochondrial ribosomes in a GTP-dependent manner.</text>
</comment>
<comment type="catalytic activity">
    <reaction evidence="1">
        <text>GTP + H2O = GDP + phosphate + H(+)</text>
        <dbReference type="Rhea" id="RHEA:19669"/>
        <dbReference type="ChEBI" id="CHEBI:15377"/>
        <dbReference type="ChEBI" id="CHEBI:15378"/>
        <dbReference type="ChEBI" id="CHEBI:37565"/>
        <dbReference type="ChEBI" id="CHEBI:43474"/>
        <dbReference type="ChEBI" id="CHEBI:58189"/>
    </reaction>
</comment>
<comment type="subcellular location">
    <subcellularLocation>
        <location evidence="1">Mitochondrion inner membrane</location>
        <topology evidence="1">Peripheral membrane protein</topology>
        <orientation evidence="1">Matrix side</orientation>
    </subcellularLocation>
</comment>
<comment type="miscellaneous">
    <text evidence="1">This protein may be expected to contain an N-terminal transit peptide but none has been predicted.</text>
</comment>
<comment type="similarity">
    <text evidence="2">Belongs to the TRAFAC class translation factor GTPase superfamily. Classic translation factor GTPase family. LepA subfamily.</text>
</comment>
<name>GUF1_CAEEL</name>
<gene>
    <name type="ORF">ZK1236.1</name>
</gene>
<evidence type="ECO:0000255" key="1">
    <source>
        <dbReference type="HAMAP-Rule" id="MF_03137"/>
    </source>
</evidence>
<evidence type="ECO:0000305" key="2"/>